<proteinExistence type="inferred from homology"/>
<accession>A4JAR1</accession>
<evidence type="ECO:0000255" key="1">
    <source>
        <dbReference type="HAMAP-Rule" id="MF_00075"/>
    </source>
</evidence>
<gene>
    <name evidence="1" type="primary">infA1</name>
    <name type="ordered locus">Bcep1808_0351</name>
</gene>
<sequence>MAKDDVIQMQGEVIENLPNATFRVKLENGHVVLGHISGKMRMHYIRILPGDKVTVELTPYDLSRARIVFRAK</sequence>
<feature type="chain" id="PRO_0000338787" description="Translation initiation factor IF-1 1">
    <location>
        <begin position="1"/>
        <end position="72"/>
    </location>
</feature>
<feature type="domain" description="S1-like" evidence="1">
    <location>
        <begin position="1"/>
        <end position="72"/>
    </location>
</feature>
<name>IF11_BURVG</name>
<organism>
    <name type="scientific">Burkholderia vietnamiensis (strain G4 / LMG 22486)</name>
    <name type="common">Burkholderia cepacia (strain R1808)</name>
    <dbReference type="NCBI Taxonomy" id="269482"/>
    <lineage>
        <taxon>Bacteria</taxon>
        <taxon>Pseudomonadati</taxon>
        <taxon>Pseudomonadota</taxon>
        <taxon>Betaproteobacteria</taxon>
        <taxon>Burkholderiales</taxon>
        <taxon>Burkholderiaceae</taxon>
        <taxon>Burkholderia</taxon>
        <taxon>Burkholderia cepacia complex</taxon>
    </lineage>
</organism>
<keyword id="KW-0963">Cytoplasm</keyword>
<keyword id="KW-0396">Initiation factor</keyword>
<keyword id="KW-0648">Protein biosynthesis</keyword>
<keyword id="KW-0694">RNA-binding</keyword>
<keyword id="KW-0699">rRNA-binding</keyword>
<protein>
    <recommendedName>
        <fullName evidence="1">Translation initiation factor IF-1 1</fullName>
    </recommendedName>
</protein>
<dbReference type="EMBL" id="CP000614">
    <property type="protein sequence ID" value="ABO53364.1"/>
    <property type="molecule type" value="Genomic_DNA"/>
</dbReference>
<dbReference type="SMR" id="A4JAR1"/>
<dbReference type="KEGG" id="bvi:Bcep1808_0351"/>
<dbReference type="eggNOG" id="COG0361">
    <property type="taxonomic scope" value="Bacteria"/>
</dbReference>
<dbReference type="HOGENOM" id="CLU_151267_1_0_4"/>
<dbReference type="Proteomes" id="UP000002287">
    <property type="component" value="Chromosome 1"/>
</dbReference>
<dbReference type="GO" id="GO:0005829">
    <property type="term" value="C:cytosol"/>
    <property type="evidence" value="ECO:0007669"/>
    <property type="project" value="TreeGrafter"/>
</dbReference>
<dbReference type="GO" id="GO:0043022">
    <property type="term" value="F:ribosome binding"/>
    <property type="evidence" value="ECO:0007669"/>
    <property type="project" value="UniProtKB-UniRule"/>
</dbReference>
<dbReference type="GO" id="GO:0019843">
    <property type="term" value="F:rRNA binding"/>
    <property type="evidence" value="ECO:0007669"/>
    <property type="project" value="UniProtKB-UniRule"/>
</dbReference>
<dbReference type="GO" id="GO:0003743">
    <property type="term" value="F:translation initiation factor activity"/>
    <property type="evidence" value="ECO:0007669"/>
    <property type="project" value="UniProtKB-UniRule"/>
</dbReference>
<dbReference type="CDD" id="cd04451">
    <property type="entry name" value="S1_IF1"/>
    <property type="match status" value="1"/>
</dbReference>
<dbReference type="FunFam" id="2.40.50.140:FF:000002">
    <property type="entry name" value="Translation initiation factor IF-1"/>
    <property type="match status" value="1"/>
</dbReference>
<dbReference type="Gene3D" id="2.40.50.140">
    <property type="entry name" value="Nucleic acid-binding proteins"/>
    <property type="match status" value="1"/>
</dbReference>
<dbReference type="HAMAP" id="MF_00075">
    <property type="entry name" value="IF_1"/>
    <property type="match status" value="1"/>
</dbReference>
<dbReference type="InterPro" id="IPR012340">
    <property type="entry name" value="NA-bd_OB-fold"/>
</dbReference>
<dbReference type="InterPro" id="IPR006196">
    <property type="entry name" value="RNA-binding_domain_S1_IF1"/>
</dbReference>
<dbReference type="InterPro" id="IPR003029">
    <property type="entry name" value="S1_domain"/>
</dbReference>
<dbReference type="InterPro" id="IPR004368">
    <property type="entry name" value="TIF_IF1"/>
</dbReference>
<dbReference type="NCBIfam" id="TIGR00008">
    <property type="entry name" value="infA"/>
    <property type="match status" value="1"/>
</dbReference>
<dbReference type="PANTHER" id="PTHR33370">
    <property type="entry name" value="TRANSLATION INITIATION FACTOR IF-1, CHLOROPLASTIC"/>
    <property type="match status" value="1"/>
</dbReference>
<dbReference type="PANTHER" id="PTHR33370:SF1">
    <property type="entry name" value="TRANSLATION INITIATION FACTOR IF-1, CHLOROPLASTIC"/>
    <property type="match status" value="1"/>
</dbReference>
<dbReference type="Pfam" id="PF01176">
    <property type="entry name" value="eIF-1a"/>
    <property type="match status" value="1"/>
</dbReference>
<dbReference type="SMART" id="SM00316">
    <property type="entry name" value="S1"/>
    <property type="match status" value="1"/>
</dbReference>
<dbReference type="SUPFAM" id="SSF50249">
    <property type="entry name" value="Nucleic acid-binding proteins"/>
    <property type="match status" value="1"/>
</dbReference>
<dbReference type="PROSITE" id="PS50832">
    <property type="entry name" value="S1_IF1_TYPE"/>
    <property type="match status" value="1"/>
</dbReference>
<reference key="1">
    <citation type="submission" date="2007-03" db="EMBL/GenBank/DDBJ databases">
        <title>Complete sequence of chromosome 1 of Burkholderia vietnamiensis G4.</title>
        <authorList>
            <consortium name="US DOE Joint Genome Institute"/>
            <person name="Copeland A."/>
            <person name="Lucas S."/>
            <person name="Lapidus A."/>
            <person name="Barry K."/>
            <person name="Detter J.C."/>
            <person name="Glavina del Rio T."/>
            <person name="Hammon N."/>
            <person name="Israni S."/>
            <person name="Dalin E."/>
            <person name="Tice H."/>
            <person name="Pitluck S."/>
            <person name="Chain P."/>
            <person name="Malfatti S."/>
            <person name="Shin M."/>
            <person name="Vergez L."/>
            <person name="Schmutz J."/>
            <person name="Larimer F."/>
            <person name="Land M."/>
            <person name="Hauser L."/>
            <person name="Kyrpides N."/>
            <person name="Tiedje J."/>
            <person name="Richardson P."/>
        </authorList>
    </citation>
    <scope>NUCLEOTIDE SEQUENCE [LARGE SCALE GENOMIC DNA]</scope>
    <source>
        <strain>G4 / LMG 22486</strain>
    </source>
</reference>
<comment type="function">
    <text evidence="1">One of the essential components for the initiation of protein synthesis. Stabilizes the binding of IF-2 and IF-3 on the 30S subunit to which N-formylmethionyl-tRNA(fMet) subsequently binds. Helps modulate mRNA selection, yielding the 30S pre-initiation complex (PIC). Upon addition of the 50S ribosomal subunit IF-1, IF-2 and IF-3 are released leaving the mature 70S translation initiation complex.</text>
</comment>
<comment type="subunit">
    <text evidence="1">Component of the 30S ribosomal translation pre-initiation complex which assembles on the 30S ribosome in the order IF-2 and IF-3, IF-1 and N-formylmethionyl-tRNA(fMet); mRNA recruitment can occur at any time during PIC assembly.</text>
</comment>
<comment type="subcellular location">
    <subcellularLocation>
        <location evidence="1">Cytoplasm</location>
    </subcellularLocation>
</comment>
<comment type="similarity">
    <text evidence="1">Belongs to the IF-1 family.</text>
</comment>